<feature type="chain" id="PRO_1000114099" description="Aminomethyltransferase">
    <location>
        <begin position="1"/>
        <end position="361"/>
    </location>
</feature>
<keyword id="KW-0032">Aminotransferase</keyword>
<keyword id="KW-0808">Transferase</keyword>
<organism>
    <name type="scientific">Herpetosiphon aurantiacus (strain ATCC 23779 / DSM 785 / 114-95)</name>
    <dbReference type="NCBI Taxonomy" id="316274"/>
    <lineage>
        <taxon>Bacteria</taxon>
        <taxon>Bacillati</taxon>
        <taxon>Chloroflexota</taxon>
        <taxon>Chloroflexia</taxon>
        <taxon>Herpetosiphonales</taxon>
        <taxon>Herpetosiphonaceae</taxon>
        <taxon>Herpetosiphon</taxon>
    </lineage>
</organism>
<proteinExistence type="inferred from homology"/>
<sequence>MKQTPLNARHRALGARMVEFGGWDMPVQYAGIIAEHKATREGAGLFDISHMARFWVTGPDSERFIQLIDTFDISKTAIGQSDYGIMCYEDGGIVDDIFTYHLGPDEWMVVANAGNAEKDWAWLNQHTAGYDVVLTDRSQELAMIALQGPKAESLLAPLTDADVVNLAFHGITKATVEGAAGYISRTGYTGEDGFELFLPAGEIERIWDRLLEVGATPIGLGARDSLRFEPGLALYGHEIERDINPYEAKLGWVVKLDKGPFIGSEALHDIKANGPVRTLVGLEMTGRGIARQGYPVVALDGSELGVVTTGMPSPSLGKNLAYALVKAGSLKIGAEVDVLIREKPVRATVVKTPFYKARYKK</sequence>
<name>GCST_HERA2</name>
<dbReference type="EC" id="2.1.2.10" evidence="1"/>
<dbReference type="EMBL" id="CP000875">
    <property type="protein sequence ID" value="ABX05506.1"/>
    <property type="molecule type" value="Genomic_DNA"/>
</dbReference>
<dbReference type="SMR" id="A9B2Q5"/>
<dbReference type="FunCoup" id="A9B2Q5">
    <property type="interactions" value="452"/>
</dbReference>
<dbReference type="STRING" id="316274.Haur_2868"/>
<dbReference type="KEGG" id="hau:Haur_2868"/>
<dbReference type="eggNOG" id="COG0404">
    <property type="taxonomic scope" value="Bacteria"/>
</dbReference>
<dbReference type="HOGENOM" id="CLU_007884_10_2_0"/>
<dbReference type="InParanoid" id="A9B2Q5"/>
<dbReference type="Proteomes" id="UP000000787">
    <property type="component" value="Chromosome"/>
</dbReference>
<dbReference type="GO" id="GO:0005829">
    <property type="term" value="C:cytosol"/>
    <property type="evidence" value="ECO:0007669"/>
    <property type="project" value="TreeGrafter"/>
</dbReference>
<dbReference type="GO" id="GO:0005960">
    <property type="term" value="C:glycine cleavage complex"/>
    <property type="evidence" value="ECO:0007669"/>
    <property type="project" value="InterPro"/>
</dbReference>
<dbReference type="GO" id="GO:0004047">
    <property type="term" value="F:aminomethyltransferase activity"/>
    <property type="evidence" value="ECO:0007669"/>
    <property type="project" value="UniProtKB-UniRule"/>
</dbReference>
<dbReference type="GO" id="GO:0008483">
    <property type="term" value="F:transaminase activity"/>
    <property type="evidence" value="ECO:0007669"/>
    <property type="project" value="UniProtKB-KW"/>
</dbReference>
<dbReference type="GO" id="GO:0019464">
    <property type="term" value="P:glycine decarboxylation via glycine cleavage system"/>
    <property type="evidence" value="ECO:0007669"/>
    <property type="project" value="UniProtKB-UniRule"/>
</dbReference>
<dbReference type="FunFam" id="2.40.30.110:FF:000003">
    <property type="entry name" value="Aminomethyltransferase"/>
    <property type="match status" value="1"/>
</dbReference>
<dbReference type="FunFam" id="3.30.70.1400:FF:000001">
    <property type="entry name" value="Aminomethyltransferase"/>
    <property type="match status" value="1"/>
</dbReference>
<dbReference type="Gene3D" id="2.40.30.110">
    <property type="entry name" value="Aminomethyltransferase beta-barrel domains"/>
    <property type="match status" value="1"/>
</dbReference>
<dbReference type="Gene3D" id="3.30.70.1400">
    <property type="entry name" value="Aminomethyltransferase beta-barrel domains"/>
    <property type="match status" value="1"/>
</dbReference>
<dbReference type="Gene3D" id="4.10.1250.10">
    <property type="entry name" value="Aminomethyltransferase fragment"/>
    <property type="match status" value="1"/>
</dbReference>
<dbReference type="Gene3D" id="3.30.1360.120">
    <property type="entry name" value="Probable tRNA modification gtpase trme, domain 1"/>
    <property type="match status" value="1"/>
</dbReference>
<dbReference type="HAMAP" id="MF_00259">
    <property type="entry name" value="GcvT"/>
    <property type="match status" value="1"/>
</dbReference>
<dbReference type="InterPro" id="IPR006223">
    <property type="entry name" value="GCS_T"/>
</dbReference>
<dbReference type="InterPro" id="IPR022903">
    <property type="entry name" value="GCS_T_bac"/>
</dbReference>
<dbReference type="InterPro" id="IPR013977">
    <property type="entry name" value="GCST_C"/>
</dbReference>
<dbReference type="InterPro" id="IPR006222">
    <property type="entry name" value="GCV_T_N"/>
</dbReference>
<dbReference type="InterPro" id="IPR028896">
    <property type="entry name" value="GcvT/YgfZ/DmdA"/>
</dbReference>
<dbReference type="InterPro" id="IPR029043">
    <property type="entry name" value="GcvT/YgfZ_C"/>
</dbReference>
<dbReference type="InterPro" id="IPR027266">
    <property type="entry name" value="TrmE/GcvT_dom1"/>
</dbReference>
<dbReference type="NCBIfam" id="TIGR00528">
    <property type="entry name" value="gcvT"/>
    <property type="match status" value="1"/>
</dbReference>
<dbReference type="NCBIfam" id="NF001567">
    <property type="entry name" value="PRK00389.1"/>
    <property type="match status" value="1"/>
</dbReference>
<dbReference type="PANTHER" id="PTHR43757">
    <property type="entry name" value="AMINOMETHYLTRANSFERASE"/>
    <property type="match status" value="1"/>
</dbReference>
<dbReference type="PANTHER" id="PTHR43757:SF2">
    <property type="entry name" value="AMINOMETHYLTRANSFERASE, MITOCHONDRIAL"/>
    <property type="match status" value="1"/>
</dbReference>
<dbReference type="Pfam" id="PF01571">
    <property type="entry name" value="GCV_T"/>
    <property type="match status" value="1"/>
</dbReference>
<dbReference type="Pfam" id="PF08669">
    <property type="entry name" value="GCV_T_C"/>
    <property type="match status" value="1"/>
</dbReference>
<dbReference type="PIRSF" id="PIRSF006487">
    <property type="entry name" value="GcvT"/>
    <property type="match status" value="1"/>
</dbReference>
<dbReference type="SUPFAM" id="SSF101790">
    <property type="entry name" value="Aminomethyltransferase beta-barrel domain"/>
    <property type="match status" value="1"/>
</dbReference>
<dbReference type="SUPFAM" id="SSF103025">
    <property type="entry name" value="Folate-binding domain"/>
    <property type="match status" value="1"/>
</dbReference>
<gene>
    <name evidence="1" type="primary">gcvT</name>
    <name type="ordered locus">Haur_2868</name>
</gene>
<accession>A9B2Q5</accession>
<evidence type="ECO:0000255" key="1">
    <source>
        <dbReference type="HAMAP-Rule" id="MF_00259"/>
    </source>
</evidence>
<reference key="1">
    <citation type="journal article" date="2011" name="Stand. Genomic Sci.">
        <title>Complete genome sequence of the filamentous gliding predatory bacterium Herpetosiphon aurantiacus type strain (114-95(T)).</title>
        <authorList>
            <person name="Kiss H."/>
            <person name="Nett M."/>
            <person name="Domin N."/>
            <person name="Martin K."/>
            <person name="Maresca J.A."/>
            <person name="Copeland A."/>
            <person name="Lapidus A."/>
            <person name="Lucas S."/>
            <person name="Berry K.W."/>
            <person name="Glavina Del Rio T."/>
            <person name="Dalin E."/>
            <person name="Tice H."/>
            <person name="Pitluck S."/>
            <person name="Richardson P."/>
            <person name="Bruce D."/>
            <person name="Goodwin L."/>
            <person name="Han C."/>
            <person name="Detter J.C."/>
            <person name="Schmutz J."/>
            <person name="Brettin T."/>
            <person name="Land M."/>
            <person name="Hauser L."/>
            <person name="Kyrpides N.C."/>
            <person name="Ivanova N."/>
            <person name="Goeker M."/>
            <person name="Woyke T."/>
            <person name="Klenk H.P."/>
            <person name="Bryant D.A."/>
        </authorList>
    </citation>
    <scope>NUCLEOTIDE SEQUENCE [LARGE SCALE GENOMIC DNA]</scope>
    <source>
        <strain>ATCC 23779 / DSM 785 / 114-95</strain>
    </source>
</reference>
<comment type="function">
    <text evidence="1">The glycine cleavage system catalyzes the degradation of glycine.</text>
</comment>
<comment type="catalytic activity">
    <reaction evidence="1">
        <text>N(6)-[(R)-S(8)-aminomethyldihydrolipoyl]-L-lysyl-[protein] + (6S)-5,6,7,8-tetrahydrofolate = N(6)-[(R)-dihydrolipoyl]-L-lysyl-[protein] + (6R)-5,10-methylene-5,6,7,8-tetrahydrofolate + NH4(+)</text>
        <dbReference type="Rhea" id="RHEA:16945"/>
        <dbReference type="Rhea" id="RHEA-COMP:10475"/>
        <dbReference type="Rhea" id="RHEA-COMP:10492"/>
        <dbReference type="ChEBI" id="CHEBI:15636"/>
        <dbReference type="ChEBI" id="CHEBI:28938"/>
        <dbReference type="ChEBI" id="CHEBI:57453"/>
        <dbReference type="ChEBI" id="CHEBI:83100"/>
        <dbReference type="ChEBI" id="CHEBI:83143"/>
        <dbReference type="EC" id="2.1.2.10"/>
    </reaction>
</comment>
<comment type="subunit">
    <text evidence="1">The glycine cleavage system is composed of four proteins: P, T, L and H.</text>
</comment>
<comment type="similarity">
    <text evidence="1">Belongs to the GcvT family.</text>
</comment>
<protein>
    <recommendedName>
        <fullName evidence="1">Aminomethyltransferase</fullName>
        <ecNumber evidence="1">2.1.2.10</ecNumber>
    </recommendedName>
    <alternativeName>
        <fullName evidence="1">Glycine cleavage system T protein</fullName>
    </alternativeName>
</protein>